<evidence type="ECO:0000250" key="1"/>
<evidence type="ECO:0000305" key="2"/>
<organism>
    <name type="scientific">Gallus gallus</name>
    <name type="common">Chicken</name>
    <dbReference type="NCBI Taxonomy" id="9031"/>
    <lineage>
        <taxon>Eukaryota</taxon>
        <taxon>Metazoa</taxon>
        <taxon>Chordata</taxon>
        <taxon>Craniata</taxon>
        <taxon>Vertebrata</taxon>
        <taxon>Euteleostomi</taxon>
        <taxon>Archelosauria</taxon>
        <taxon>Archosauria</taxon>
        <taxon>Dinosauria</taxon>
        <taxon>Saurischia</taxon>
        <taxon>Theropoda</taxon>
        <taxon>Coelurosauria</taxon>
        <taxon>Aves</taxon>
        <taxon>Neognathae</taxon>
        <taxon>Galloanserae</taxon>
        <taxon>Galliformes</taxon>
        <taxon>Phasianidae</taxon>
        <taxon>Phasianinae</taxon>
        <taxon>Gallus</taxon>
    </lineage>
</organism>
<accession>Q5ZLW3</accession>
<protein>
    <recommendedName>
        <fullName>Dymeclin</fullName>
    </recommendedName>
</protein>
<keyword id="KW-0963">Cytoplasm</keyword>
<keyword id="KW-0333">Golgi apparatus</keyword>
<keyword id="KW-0449">Lipoprotein</keyword>
<keyword id="KW-0519">Myristate</keyword>
<keyword id="KW-1185">Reference proteome</keyword>
<dbReference type="EMBL" id="AJ719621">
    <property type="protein sequence ID" value="CAG31280.1"/>
    <property type="molecule type" value="mRNA"/>
</dbReference>
<dbReference type="RefSeq" id="NP_001026569.1">
    <property type="nucleotide sequence ID" value="NM_001031398.2"/>
</dbReference>
<dbReference type="RefSeq" id="XP_040511426.1">
    <property type="nucleotide sequence ID" value="XM_040655492.2"/>
</dbReference>
<dbReference type="RefSeq" id="XP_040511428.1">
    <property type="nucleotide sequence ID" value="XM_040655494.2"/>
</dbReference>
<dbReference type="RefSeq" id="XP_046761264.1">
    <property type="nucleotide sequence ID" value="XM_046905308.1"/>
</dbReference>
<dbReference type="RefSeq" id="XP_046761266.1">
    <property type="nucleotide sequence ID" value="XM_046905310.1"/>
</dbReference>
<dbReference type="RefSeq" id="XP_046761267.1">
    <property type="nucleotide sequence ID" value="XM_046905311.1"/>
</dbReference>
<dbReference type="RefSeq" id="XP_046790928.1">
    <property type="nucleotide sequence ID" value="XM_046934972.1"/>
</dbReference>
<dbReference type="RefSeq" id="XP_046790929.1">
    <property type="nucleotide sequence ID" value="XM_046934973.1"/>
</dbReference>
<dbReference type="RefSeq" id="XP_046790930.1">
    <property type="nucleotide sequence ID" value="XM_046934974.1"/>
</dbReference>
<dbReference type="RefSeq" id="XP_046790931.1">
    <property type="nucleotide sequence ID" value="XM_046934975.1"/>
</dbReference>
<dbReference type="RefSeq" id="XP_046790932.1">
    <property type="nucleotide sequence ID" value="XM_046934976.1"/>
</dbReference>
<dbReference type="FunCoup" id="Q5ZLW3">
    <property type="interactions" value="1550"/>
</dbReference>
<dbReference type="STRING" id="9031.ENSGALP00000071648"/>
<dbReference type="PaxDb" id="9031-ENSGALP00000038869"/>
<dbReference type="Ensembl" id="ENSGALT00010026140.1">
    <property type="protein sequence ID" value="ENSGALP00010014764.1"/>
    <property type="gene ID" value="ENSGALG00010010922.1"/>
</dbReference>
<dbReference type="GeneID" id="426843"/>
<dbReference type="KEGG" id="gga:426843"/>
<dbReference type="CTD" id="54808"/>
<dbReference type="VEuPathDB" id="HostDB:geneid_426843"/>
<dbReference type="eggNOG" id="KOG2225">
    <property type="taxonomic scope" value="Eukaryota"/>
</dbReference>
<dbReference type="GeneTree" id="ENSGT00390000008772"/>
<dbReference type="HOGENOM" id="CLU_013309_2_0_1"/>
<dbReference type="InParanoid" id="Q5ZLW3"/>
<dbReference type="OrthoDB" id="10253409at2759"/>
<dbReference type="PhylomeDB" id="Q5ZLW3"/>
<dbReference type="PRO" id="PR:Q5ZLW3"/>
<dbReference type="Proteomes" id="UP000000539">
    <property type="component" value="Chromosome Z"/>
</dbReference>
<dbReference type="Bgee" id="ENSGALG00000037426">
    <property type="expression patterns" value="Expressed in skeletal muscle tissue and 13 other cell types or tissues"/>
</dbReference>
<dbReference type="GO" id="GO:0005794">
    <property type="term" value="C:Golgi apparatus"/>
    <property type="evidence" value="ECO:0000318"/>
    <property type="project" value="GO_Central"/>
</dbReference>
<dbReference type="GO" id="GO:0007030">
    <property type="term" value="P:Golgi organization"/>
    <property type="evidence" value="ECO:0000318"/>
    <property type="project" value="GO_Central"/>
</dbReference>
<dbReference type="InterPro" id="IPR019142">
    <property type="entry name" value="Dymeclin"/>
</dbReference>
<dbReference type="PANTHER" id="PTHR12895">
    <property type="entry name" value="DYMECLIN"/>
    <property type="match status" value="1"/>
</dbReference>
<dbReference type="PANTHER" id="PTHR12895:SF9">
    <property type="entry name" value="DYMECLIN"/>
    <property type="match status" value="1"/>
</dbReference>
<dbReference type="Pfam" id="PF09742">
    <property type="entry name" value="Dymeclin"/>
    <property type="match status" value="1"/>
</dbReference>
<comment type="function">
    <text evidence="1">Necessary for correct organization of Golgi apparatus.</text>
</comment>
<comment type="subcellular location">
    <subcellularLocation>
        <location>Cytoplasm</location>
    </subcellularLocation>
    <subcellularLocation>
        <location evidence="1">Golgi apparatus</location>
    </subcellularLocation>
    <text evidence="1">Sequence analysis programs predict 1 transmembrane region. However, it has been shown in human that it is not a stably anchored transmembrane protein but it weakly associates with the Golgi apparatus and shuttles between the Golgi and the cytosol (By similarity).</text>
</comment>
<comment type="PTM">
    <text evidence="1">Myristoylated in vitro; myristoylation is not essential for protein targeting to Golgi compartment.</text>
</comment>
<comment type="similarity">
    <text evidence="2">Belongs to the dymeclin family.</text>
</comment>
<sequence length="669" mass="76161">MGANSSSISELPDNEYLKKLSGAEPISENDPFWNQLLSFSFTTPTNSADLKLLEEATVSVCKSLVEKNPRTGNLGSLIKVFLSRTKELKISAECQNHLFIWQAHNALFIICCLLKVFISRMSEEELQLHFTYEDKTPGSYGTECEDLIEELLCCLIQLIVEIPLLDITYSISLEAVTTLIVFLSCQLFHKEILRESLIHKYLMRGRCLPYTSRLVKTLLYNFIRQERSPPPGSHVFQQQTDGGGLLYGIASGVATGLWTVFTLGGVGSKATPQLDQCSPLANQSLLLLLVLANLTDAPDTPNPYRQAIMSFKNTQDSSAFSSSHPHVFQINFNSLYTALCEQQKSDQATLLLYMLLHQNGNVRTYVLARTDIENLVLPILEILYHVEERNSHHVYMALIILLILTEDDGFNRSIHEVILKNITWYAERVLTEISLGSLLILVVIRTIQYNMTRTRDKYLHTNCLAALANMSAQFRSLHQYAAQRIISLFSLLSKKHNKVLEQATQSLRGSLDSNDSPLPDYAQDLNVIEEVIRMMLEIINSCLTNSLHHNPNLVYALLYKRDLFEQFRTHPSFQDIMQNIDLVISFFSSRLEHAGAELSVERVLEIIKQGAVALPKDRLRKFPELKFKYVEEEQPEEFFIPYVWSLVYNAAVALYWNPRDIQLFTMDSG</sequence>
<gene>
    <name type="primary">DYM</name>
    <name type="ORF">RCJMB04_4k4</name>
</gene>
<proteinExistence type="evidence at transcript level"/>
<reference key="1">
    <citation type="journal article" date="2005" name="Genome Biol.">
        <title>Full-length cDNAs from chicken bursal lymphocytes to facilitate gene function analysis.</title>
        <authorList>
            <person name="Caldwell R.B."/>
            <person name="Kierzek A.M."/>
            <person name="Arakawa H."/>
            <person name="Bezzubov Y."/>
            <person name="Zaim J."/>
            <person name="Fiedler P."/>
            <person name="Kutter S."/>
            <person name="Blagodatski A."/>
            <person name="Kostovska D."/>
            <person name="Koter M."/>
            <person name="Plachy J."/>
            <person name="Carninci P."/>
            <person name="Hayashizaki Y."/>
            <person name="Buerstedde J.-M."/>
        </authorList>
    </citation>
    <scope>NUCLEOTIDE SEQUENCE [LARGE SCALE MRNA]</scope>
    <source>
        <strain>CB</strain>
        <tissue>Bursa of Fabricius</tissue>
    </source>
</reference>
<feature type="initiator methionine" description="Removed" evidence="1">
    <location>
        <position position="1"/>
    </location>
</feature>
<feature type="chain" id="PRO_0000086882" description="Dymeclin">
    <location>
        <begin position="2"/>
        <end position="669"/>
    </location>
</feature>
<feature type="lipid moiety-binding region" description="N-myristoyl glycine" evidence="1">
    <location>
        <position position="2"/>
    </location>
</feature>
<name>DYM_CHICK</name>